<comment type="function">
    <text evidence="1">Catalyzes the reduction of prostaglandin-ethanolamide H(2) (prostamide H(2)) to prostamide F(2alpha) with NADPH as proton donor. Also able to reduce prostaglandin H(2) to prostaglandin F(2alpha) (By similarity).</text>
</comment>
<comment type="catalytic activity">
    <reaction evidence="1">
        <text>prostaglandin H2 + [thioredoxin]-dithiol = prostaglandin F2alpha + [thioredoxin]-disulfide</text>
        <dbReference type="Rhea" id="RHEA:28214"/>
        <dbReference type="Rhea" id="RHEA-COMP:10698"/>
        <dbReference type="Rhea" id="RHEA-COMP:10700"/>
        <dbReference type="ChEBI" id="CHEBI:29950"/>
        <dbReference type="ChEBI" id="CHEBI:50058"/>
        <dbReference type="ChEBI" id="CHEBI:57404"/>
        <dbReference type="ChEBI" id="CHEBI:57405"/>
        <dbReference type="EC" id="1.11.1.20"/>
    </reaction>
</comment>
<comment type="catalytic activity">
    <reaction evidence="1">
        <text>prostamide F2alpha + [thioredoxin]-disulfide = prostamide H2 + [thioredoxin]-dithiol</text>
        <dbReference type="Rhea" id="RHEA:26373"/>
        <dbReference type="Rhea" id="RHEA-COMP:10698"/>
        <dbReference type="Rhea" id="RHEA-COMP:10700"/>
        <dbReference type="ChEBI" id="CHEBI:29950"/>
        <dbReference type="ChEBI" id="CHEBI:50058"/>
        <dbReference type="ChEBI" id="CHEBI:53081"/>
        <dbReference type="ChEBI" id="CHEBI:53082"/>
        <dbReference type="EC" id="1.11.1.20"/>
    </reaction>
</comment>
<comment type="subcellular location">
    <subcellularLocation>
        <location evidence="1">Cytoplasm</location>
        <location evidence="1">Cytosol</location>
    </subcellularLocation>
</comment>
<comment type="similarity">
    <text evidence="2">Belongs to the peroxiredoxin-like PRXL2 family. Prostamide/prostaglandin F synthase subfamily.</text>
</comment>
<proteinExistence type="evidence at transcript level"/>
<evidence type="ECO:0000250" key="1">
    <source>
        <dbReference type="UniProtKB" id="Q9DB60"/>
    </source>
</evidence>
<evidence type="ECO:0000305" key="2"/>
<feature type="chain" id="PRO_0000284640" description="Prostamide/prostaglandin F synthase">
    <location>
        <begin position="1"/>
        <end position="201"/>
    </location>
</feature>
<protein>
    <recommendedName>
        <fullName>Prostamide/prostaglandin F synthase</fullName>
        <shortName>Prostamide/PG F synthase</shortName>
        <shortName>Prostamide/PGF synthase</shortName>
        <ecNumber evidence="1">1.11.1.20</ecNumber>
    </recommendedName>
    <alternativeName>
        <fullName>Peroxiredoxin-like 2B</fullName>
    </alternativeName>
</protein>
<name>PXL2B_DANRE</name>
<accession>Q6NV24</accession>
<organism>
    <name type="scientific">Danio rerio</name>
    <name type="common">Zebrafish</name>
    <name type="synonym">Brachydanio rerio</name>
    <dbReference type="NCBI Taxonomy" id="7955"/>
    <lineage>
        <taxon>Eukaryota</taxon>
        <taxon>Metazoa</taxon>
        <taxon>Chordata</taxon>
        <taxon>Craniata</taxon>
        <taxon>Vertebrata</taxon>
        <taxon>Euteleostomi</taxon>
        <taxon>Actinopterygii</taxon>
        <taxon>Neopterygii</taxon>
        <taxon>Teleostei</taxon>
        <taxon>Ostariophysi</taxon>
        <taxon>Cypriniformes</taxon>
        <taxon>Danionidae</taxon>
        <taxon>Danioninae</taxon>
        <taxon>Danio</taxon>
    </lineage>
</organism>
<reference key="1">
    <citation type="submission" date="2004-04" db="EMBL/GenBank/DDBJ databases">
        <authorList>
            <consortium name="NIH - Zebrafish Gene Collection (ZGC) project"/>
        </authorList>
    </citation>
    <scope>NUCLEOTIDE SEQUENCE [LARGE SCALE MRNA]</scope>
    <source>
        <tissue>Kidney</tissue>
    </source>
</reference>
<sequence>MSSVNLTSLGANQLKNTTTGEMVEIGSLWREQAVVLFFLRRFGCQVCRWMAAEVSKLEKDLKAHGIALVGIGPEETGVKEFKDGGFFKGDIYIDEMKQCYKDLGFKRYNAINVVPAAMGKKVREIASKASAEGIQGNFSGDLLQSGGMLIVAKGGEKVLLHFIQKSPADNPPLEEITKALGISANVQAGEKPQCNEDVCTR</sequence>
<gene>
    <name type="primary">prxl2b</name>
    <name type="synonym">fam213b</name>
    <name type="ORF">zgc:85644</name>
</gene>
<keyword id="KW-0963">Cytoplasm</keyword>
<keyword id="KW-0275">Fatty acid biosynthesis</keyword>
<keyword id="KW-0276">Fatty acid metabolism</keyword>
<keyword id="KW-0444">Lipid biosynthesis</keyword>
<keyword id="KW-0443">Lipid metabolism</keyword>
<keyword id="KW-0521">NADP</keyword>
<keyword id="KW-0560">Oxidoreductase</keyword>
<keyword id="KW-0643">Prostaglandin biosynthesis</keyword>
<keyword id="KW-0644">Prostaglandin metabolism</keyword>
<keyword id="KW-1185">Reference proteome</keyword>
<dbReference type="EC" id="1.11.1.20" evidence="1"/>
<dbReference type="EMBL" id="BC068342">
    <property type="protein sequence ID" value="AAH68342.1"/>
    <property type="molecule type" value="mRNA"/>
</dbReference>
<dbReference type="RefSeq" id="NP_998478.1">
    <property type="nucleotide sequence ID" value="NM_213313.1"/>
</dbReference>
<dbReference type="FunCoup" id="Q6NV24">
    <property type="interactions" value="146"/>
</dbReference>
<dbReference type="STRING" id="7955.ENSDARP00000113812"/>
<dbReference type="PaxDb" id="7955-ENSDARP00000113812"/>
<dbReference type="GeneID" id="406605"/>
<dbReference type="KEGG" id="dre:406605"/>
<dbReference type="AGR" id="ZFIN:ZDB-GENE-040426-2556"/>
<dbReference type="CTD" id="127281"/>
<dbReference type="ZFIN" id="ZDB-GENE-040426-2556">
    <property type="gene designation" value="prxl2b"/>
</dbReference>
<dbReference type="eggNOG" id="KOG4498">
    <property type="taxonomic scope" value="Eukaryota"/>
</dbReference>
<dbReference type="InParanoid" id="Q6NV24"/>
<dbReference type="OrthoDB" id="40334at2759"/>
<dbReference type="PhylomeDB" id="Q6NV24"/>
<dbReference type="PRO" id="PR:Q6NV24"/>
<dbReference type="Proteomes" id="UP000000437">
    <property type="component" value="Chromosome 11"/>
</dbReference>
<dbReference type="GO" id="GO:0005737">
    <property type="term" value="C:cytoplasm"/>
    <property type="evidence" value="ECO:0000318"/>
    <property type="project" value="GO_Central"/>
</dbReference>
<dbReference type="GO" id="GO:0005829">
    <property type="term" value="C:cytosol"/>
    <property type="evidence" value="ECO:0007669"/>
    <property type="project" value="UniProtKB-SubCell"/>
</dbReference>
<dbReference type="GO" id="GO:0016616">
    <property type="term" value="F:oxidoreductase activity, acting on the CH-OH group of donors, NAD or NADP as acceptor"/>
    <property type="evidence" value="ECO:0000250"/>
    <property type="project" value="UniProtKB"/>
</dbReference>
<dbReference type="GO" id="GO:0047017">
    <property type="term" value="F:prostaglandin F synthase activity"/>
    <property type="evidence" value="ECO:0000318"/>
    <property type="project" value="GO_Central"/>
</dbReference>
<dbReference type="GO" id="GO:0001516">
    <property type="term" value="P:prostaglandin biosynthetic process"/>
    <property type="evidence" value="ECO:0000250"/>
    <property type="project" value="UniProtKB"/>
</dbReference>
<dbReference type="CDD" id="cd02970">
    <property type="entry name" value="PRX_like2"/>
    <property type="match status" value="1"/>
</dbReference>
<dbReference type="FunFam" id="3.40.30.10:FF:000243">
    <property type="entry name" value="Prostamide/prostaglandin F synthase"/>
    <property type="match status" value="1"/>
</dbReference>
<dbReference type="Gene3D" id="3.40.30.10">
    <property type="entry name" value="Glutaredoxin"/>
    <property type="match status" value="1"/>
</dbReference>
<dbReference type="InterPro" id="IPR032801">
    <property type="entry name" value="PXL2A/B/C"/>
</dbReference>
<dbReference type="InterPro" id="IPR036249">
    <property type="entry name" value="Thioredoxin-like_sf"/>
</dbReference>
<dbReference type="PANTHER" id="PTHR28630">
    <property type="match status" value="1"/>
</dbReference>
<dbReference type="PANTHER" id="PTHR28630:SF28">
    <property type="entry name" value="PROSTAMIDE_PROSTAGLANDIN F SYNTHASE"/>
    <property type="match status" value="1"/>
</dbReference>
<dbReference type="Pfam" id="PF13911">
    <property type="entry name" value="AhpC-TSA_2"/>
    <property type="match status" value="1"/>
</dbReference>
<dbReference type="SUPFAM" id="SSF52833">
    <property type="entry name" value="Thioredoxin-like"/>
    <property type="match status" value="1"/>
</dbReference>